<dbReference type="EMBL" id="AE006468">
    <property type="protein sequence ID" value="AAL19083.1"/>
    <property type="molecule type" value="Genomic_DNA"/>
</dbReference>
<dbReference type="RefSeq" id="WP_000488294.1">
    <property type="nucleotide sequence ID" value="NC_003197.2"/>
</dbReference>
<dbReference type="SMR" id="Q8ZRU9"/>
<dbReference type="STRING" id="99287.STM0119"/>
<dbReference type="PaxDb" id="99287-STM0119"/>
<dbReference type="KEGG" id="stm:STM0119"/>
<dbReference type="PATRIC" id="fig|99287.12.peg.125"/>
<dbReference type="HOGENOM" id="CLU_107907_2_0_6"/>
<dbReference type="OMA" id="ECELDGN"/>
<dbReference type="PhylomeDB" id="Q8ZRU9"/>
<dbReference type="BioCyc" id="SENT99287:STM0119-MONOMER"/>
<dbReference type="Proteomes" id="UP000001014">
    <property type="component" value="Chromosome"/>
</dbReference>
<dbReference type="GO" id="GO:0005737">
    <property type="term" value="C:cytoplasm"/>
    <property type="evidence" value="ECO:0007669"/>
    <property type="project" value="UniProtKB-UniRule"/>
</dbReference>
<dbReference type="GO" id="GO:0009295">
    <property type="term" value="C:nucleoid"/>
    <property type="evidence" value="ECO:0007669"/>
    <property type="project" value="UniProtKB-SubCell"/>
</dbReference>
<dbReference type="GO" id="GO:0003700">
    <property type="term" value="F:DNA-binding transcription factor activity"/>
    <property type="evidence" value="ECO:0000318"/>
    <property type="project" value="GO_Central"/>
</dbReference>
<dbReference type="GO" id="GO:0000976">
    <property type="term" value="F:transcription cis-regulatory region binding"/>
    <property type="evidence" value="ECO:0000318"/>
    <property type="project" value="GO_Central"/>
</dbReference>
<dbReference type="GO" id="GO:2000143">
    <property type="term" value="P:negative regulation of DNA-templated transcription initiation"/>
    <property type="evidence" value="ECO:0000318"/>
    <property type="project" value="GO_Central"/>
</dbReference>
<dbReference type="CDD" id="cd16321">
    <property type="entry name" value="MraZ_C"/>
    <property type="match status" value="1"/>
</dbReference>
<dbReference type="CDD" id="cd16320">
    <property type="entry name" value="MraZ_N"/>
    <property type="match status" value="1"/>
</dbReference>
<dbReference type="FunFam" id="3.40.1550.20:FF:000001">
    <property type="entry name" value="Transcriptional regulator MraZ"/>
    <property type="match status" value="1"/>
</dbReference>
<dbReference type="Gene3D" id="3.40.1550.20">
    <property type="entry name" value="Transcriptional regulator MraZ domain"/>
    <property type="match status" value="1"/>
</dbReference>
<dbReference type="HAMAP" id="MF_01008">
    <property type="entry name" value="MraZ"/>
    <property type="match status" value="1"/>
</dbReference>
<dbReference type="InterPro" id="IPR003444">
    <property type="entry name" value="MraZ"/>
</dbReference>
<dbReference type="InterPro" id="IPR035644">
    <property type="entry name" value="MraZ_C"/>
</dbReference>
<dbReference type="InterPro" id="IPR020603">
    <property type="entry name" value="MraZ_dom"/>
</dbReference>
<dbReference type="InterPro" id="IPR035642">
    <property type="entry name" value="MraZ_N"/>
</dbReference>
<dbReference type="InterPro" id="IPR038619">
    <property type="entry name" value="MraZ_sf"/>
</dbReference>
<dbReference type="InterPro" id="IPR007159">
    <property type="entry name" value="SpoVT-AbrB_dom"/>
</dbReference>
<dbReference type="InterPro" id="IPR037914">
    <property type="entry name" value="SpoVT-AbrB_sf"/>
</dbReference>
<dbReference type="NCBIfam" id="TIGR00242">
    <property type="entry name" value="division/cell wall cluster transcriptional repressor MraZ"/>
    <property type="match status" value="1"/>
</dbReference>
<dbReference type="PANTHER" id="PTHR34701">
    <property type="entry name" value="TRANSCRIPTIONAL REGULATOR MRAZ"/>
    <property type="match status" value="1"/>
</dbReference>
<dbReference type="PANTHER" id="PTHR34701:SF1">
    <property type="entry name" value="TRANSCRIPTIONAL REGULATOR MRAZ"/>
    <property type="match status" value="1"/>
</dbReference>
<dbReference type="Pfam" id="PF02381">
    <property type="entry name" value="MraZ"/>
    <property type="match status" value="2"/>
</dbReference>
<dbReference type="SUPFAM" id="SSF89447">
    <property type="entry name" value="AbrB/MazE/MraZ-like"/>
    <property type="match status" value="1"/>
</dbReference>
<dbReference type="PROSITE" id="PS51740">
    <property type="entry name" value="SPOVT_ABRB"/>
    <property type="match status" value="2"/>
</dbReference>
<keyword id="KW-0963">Cytoplasm</keyword>
<keyword id="KW-0238">DNA-binding</keyword>
<keyword id="KW-1185">Reference proteome</keyword>
<keyword id="KW-0677">Repeat</keyword>
<keyword id="KW-0678">Repressor</keyword>
<keyword id="KW-0804">Transcription</keyword>
<keyword id="KW-0805">Transcription regulation</keyword>
<feature type="chain" id="PRO_0000108532" description="Transcriptional regulator MraZ">
    <location>
        <begin position="1"/>
        <end position="152"/>
    </location>
</feature>
<feature type="domain" description="SpoVT-AbrB 1" evidence="2">
    <location>
        <begin position="5"/>
        <end position="52"/>
    </location>
</feature>
<feature type="domain" description="SpoVT-AbrB 2" evidence="2">
    <location>
        <begin position="81"/>
        <end position="124"/>
    </location>
</feature>
<comment type="function">
    <text evidence="1">Negatively regulates its own expression and that of the subsequent genes in the proximal part of the division and cell wall (dcw) gene cluster. Acts by binding directly to DNA. May also regulate the expression of genes outside the dcw cluster.</text>
</comment>
<comment type="subunit">
    <text evidence="1">Forms oligomers.</text>
</comment>
<comment type="subcellular location">
    <subcellularLocation>
        <location evidence="1">Cytoplasm</location>
        <location evidence="1">Nucleoid</location>
    </subcellularLocation>
</comment>
<comment type="similarity">
    <text evidence="1">Belongs to the MraZ family.</text>
</comment>
<accession>Q8ZRU9</accession>
<name>MRAZ_SALTY</name>
<protein>
    <recommendedName>
        <fullName>Transcriptional regulator MraZ</fullName>
    </recommendedName>
</protein>
<sequence length="152" mass="17435">MFRGATLVNLDSKGRLTVPTRYREQLIESATGQMVCTIDIHHPCLLLYPLPEWEIIEQKLSRLSSMNPVERRVQRLLLGHASECQMDGAGRLLIAPVLRQHAGLTKEVMLVGQFNKFELWDETTWYQQVKEDIDAEQSATETLSERLQDLSL</sequence>
<evidence type="ECO:0000255" key="1">
    <source>
        <dbReference type="HAMAP-Rule" id="MF_01008"/>
    </source>
</evidence>
<evidence type="ECO:0000255" key="2">
    <source>
        <dbReference type="PROSITE-ProRule" id="PRU01076"/>
    </source>
</evidence>
<proteinExistence type="inferred from homology"/>
<gene>
    <name evidence="1" type="primary">mraZ</name>
    <name type="ordered locus">STM0119</name>
</gene>
<organism>
    <name type="scientific">Salmonella typhimurium (strain LT2 / SGSC1412 / ATCC 700720)</name>
    <dbReference type="NCBI Taxonomy" id="99287"/>
    <lineage>
        <taxon>Bacteria</taxon>
        <taxon>Pseudomonadati</taxon>
        <taxon>Pseudomonadota</taxon>
        <taxon>Gammaproteobacteria</taxon>
        <taxon>Enterobacterales</taxon>
        <taxon>Enterobacteriaceae</taxon>
        <taxon>Salmonella</taxon>
    </lineage>
</organism>
<reference key="1">
    <citation type="journal article" date="2001" name="Nature">
        <title>Complete genome sequence of Salmonella enterica serovar Typhimurium LT2.</title>
        <authorList>
            <person name="McClelland M."/>
            <person name="Sanderson K.E."/>
            <person name="Spieth J."/>
            <person name="Clifton S.W."/>
            <person name="Latreille P."/>
            <person name="Courtney L."/>
            <person name="Porwollik S."/>
            <person name="Ali J."/>
            <person name="Dante M."/>
            <person name="Du F."/>
            <person name="Hou S."/>
            <person name="Layman D."/>
            <person name="Leonard S."/>
            <person name="Nguyen C."/>
            <person name="Scott K."/>
            <person name="Holmes A."/>
            <person name="Grewal N."/>
            <person name="Mulvaney E."/>
            <person name="Ryan E."/>
            <person name="Sun H."/>
            <person name="Florea L."/>
            <person name="Miller W."/>
            <person name="Stoneking T."/>
            <person name="Nhan M."/>
            <person name="Waterston R."/>
            <person name="Wilson R.K."/>
        </authorList>
    </citation>
    <scope>NUCLEOTIDE SEQUENCE [LARGE SCALE GENOMIC DNA]</scope>
    <source>
        <strain>LT2 / SGSC1412 / ATCC 700720</strain>
    </source>
</reference>